<gene>
    <name evidence="1" type="primary">leuC</name>
    <name type="ordered locus">PA3121</name>
</gene>
<comment type="function">
    <text evidence="1">Catalyzes the isomerization between 2-isopropylmalate and 3-isopropylmalate, via the formation of 2-isopropylmaleate.</text>
</comment>
<comment type="catalytic activity">
    <reaction evidence="1">
        <text>(2R,3S)-3-isopropylmalate = (2S)-2-isopropylmalate</text>
        <dbReference type="Rhea" id="RHEA:32287"/>
        <dbReference type="ChEBI" id="CHEBI:1178"/>
        <dbReference type="ChEBI" id="CHEBI:35121"/>
        <dbReference type="EC" id="4.2.1.33"/>
    </reaction>
</comment>
<comment type="cofactor">
    <cofactor evidence="1">
        <name>[4Fe-4S] cluster</name>
        <dbReference type="ChEBI" id="CHEBI:49883"/>
    </cofactor>
    <text evidence="1">Binds 1 [4Fe-4S] cluster per subunit.</text>
</comment>
<comment type="pathway">
    <text evidence="1">Amino-acid biosynthesis; L-leucine biosynthesis; L-leucine from 3-methyl-2-oxobutanoate: step 2/4.</text>
</comment>
<comment type="subunit">
    <text evidence="1">Heterodimer of LeuC and LeuD.</text>
</comment>
<comment type="similarity">
    <text evidence="1">Belongs to the aconitase/IPM isomerase family. LeuC type 1 subfamily.</text>
</comment>
<protein>
    <recommendedName>
        <fullName evidence="1">3-isopropylmalate dehydratase large subunit</fullName>
        <ecNumber evidence="1">4.2.1.33</ecNumber>
    </recommendedName>
    <alternativeName>
        <fullName evidence="1">Alpha-IPM isomerase</fullName>
        <shortName evidence="1">IPMI</shortName>
    </alternativeName>
    <alternativeName>
        <fullName evidence="1">Isopropylmalate isomerase</fullName>
    </alternativeName>
</protein>
<reference key="1">
    <citation type="journal article" date="2000" name="Nature">
        <title>Complete genome sequence of Pseudomonas aeruginosa PAO1, an opportunistic pathogen.</title>
        <authorList>
            <person name="Stover C.K."/>
            <person name="Pham X.-Q.T."/>
            <person name="Erwin A.L."/>
            <person name="Mizoguchi S.D."/>
            <person name="Warrener P."/>
            <person name="Hickey M.J."/>
            <person name="Brinkman F.S.L."/>
            <person name="Hufnagle W.O."/>
            <person name="Kowalik D.J."/>
            <person name="Lagrou M."/>
            <person name="Garber R.L."/>
            <person name="Goltry L."/>
            <person name="Tolentino E."/>
            <person name="Westbrock-Wadman S."/>
            <person name="Yuan Y."/>
            <person name="Brody L.L."/>
            <person name="Coulter S.N."/>
            <person name="Folger K.R."/>
            <person name="Kas A."/>
            <person name="Larbig K."/>
            <person name="Lim R.M."/>
            <person name="Smith K.A."/>
            <person name="Spencer D.H."/>
            <person name="Wong G.K.-S."/>
            <person name="Wu Z."/>
            <person name="Paulsen I.T."/>
            <person name="Reizer J."/>
            <person name="Saier M.H. Jr."/>
            <person name="Hancock R.E.W."/>
            <person name="Lory S."/>
            <person name="Olson M.V."/>
        </authorList>
    </citation>
    <scope>NUCLEOTIDE SEQUENCE [LARGE SCALE GENOMIC DNA]</scope>
    <source>
        <strain>ATCC 15692 / DSM 22644 / CIP 104116 / JCM 14847 / LMG 12228 / 1C / PRS 101 / PAO1</strain>
    </source>
</reference>
<proteinExistence type="inferred from homology"/>
<sequence>MAGKTLYDKLWDMHLVKQRDDGSALIYIDRHILHEVTSPQAFEGLRLAGRKPWRIDANIATPDHNVPTTRTERKGGIAAIADEVSRLQVQTLDENCDDFGITEFKMNDVRQGIVHVVGPEQGATLPGMTVVCGDSHTSTHGAFGALAHGIGTSEVEHVLATQCLVAKKMKNMLVKVEGRLPAGVTAKDIVLAVIGRIGTAGGNGHAIEFAGSAIRDLSIEGRMTICNMSIEAGARVGLVAVDQKTIDYVKGRPFAPSAEQWDQAVACWQGLVSDADARFDTVVELDAAQIKPQVSWGTSPEMVLAVDQNVPDPARESDPIKRGSIERALKYMGLRPNQAITDIQLDRVFIGSCTNSRIEDLRAAAEVARGRKVAATIKQALVVPGSGLVKEQAEKEGLDRIFIEAGFEWREPGCSMCLAMNPDRLESGEHCASTSNRNFEGRQGAGGRTHLVSPAMAAAAAVNGRFIDVRELLA</sequence>
<feature type="chain" id="PRO_0000076784" description="3-isopropylmalate dehydratase large subunit">
    <location>
        <begin position="1"/>
        <end position="474"/>
    </location>
</feature>
<feature type="binding site" evidence="1">
    <location>
        <position position="353"/>
    </location>
    <ligand>
        <name>[4Fe-4S] cluster</name>
        <dbReference type="ChEBI" id="CHEBI:49883"/>
    </ligand>
</feature>
<feature type="binding site" evidence="1">
    <location>
        <position position="414"/>
    </location>
    <ligand>
        <name>[4Fe-4S] cluster</name>
        <dbReference type="ChEBI" id="CHEBI:49883"/>
    </ligand>
</feature>
<feature type="binding site" evidence="1">
    <location>
        <position position="417"/>
    </location>
    <ligand>
        <name>[4Fe-4S] cluster</name>
        <dbReference type="ChEBI" id="CHEBI:49883"/>
    </ligand>
</feature>
<dbReference type="EC" id="4.2.1.33" evidence="1"/>
<dbReference type="EMBL" id="AE004091">
    <property type="protein sequence ID" value="AAG06509.1"/>
    <property type="molecule type" value="Genomic_DNA"/>
</dbReference>
<dbReference type="PIR" id="G83255">
    <property type="entry name" value="G83255"/>
</dbReference>
<dbReference type="RefSeq" id="NP_251811.1">
    <property type="nucleotide sequence ID" value="NC_002516.2"/>
</dbReference>
<dbReference type="RefSeq" id="WP_003091399.1">
    <property type="nucleotide sequence ID" value="NZ_QZGE01000023.1"/>
</dbReference>
<dbReference type="SMR" id="Q9HZA3"/>
<dbReference type="FunCoup" id="Q9HZA3">
    <property type="interactions" value="652"/>
</dbReference>
<dbReference type="STRING" id="208964.PA3121"/>
<dbReference type="PaxDb" id="208964-PA3121"/>
<dbReference type="GeneID" id="882827"/>
<dbReference type="KEGG" id="pae:PA3121"/>
<dbReference type="PATRIC" id="fig|208964.12.peg.3273"/>
<dbReference type="PseudoCAP" id="PA3121"/>
<dbReference type="HOGENOM" id="CLU_006714_3_4_6"/>
<dbReference type="InParanoid" id="Q9HZA3"/>
<dbReference type="OrthoDB" id="9802769at2"/>
<dbReference type="PhylomeDB" id="Q9HZA3"/>
<dbReference type="BioCyc" id="PAER208964:G1FZ6-3177-MONOMER"/>
<dbReference type="UniPathway" id="UPA00048">
    <property type="reaction ID" value="UER00071"/>
</dbReference>
<dbReference type="Proteomes" id="UP000002438">
    <property type="component" value="Chromosome"/>
</dbReference>
<dbReference type="GO" id="GO:0003861">
    <property type="term" value="F:3-isopropylmalate dehydratase activity"/>
    <property type="evidence" value="ECO:0007669"/>
    <property type="project" value="UniProtKB-UniRule"/>
</dbReference>
<dbReference type="GO" id="GO:0051539">
    <property type="term" value="F:4 iron, 4 sulfur cluster binding"/>
    <property type="evidence" value="ECO:0007669"/>
    <property type="project" value="UniProtKB-KW"/>
</dbReference>
<dbReference type="GO" id="GO:0046872">
    <property type="term" value="F:metal ion binding"/>
    <property type="evidence" value="ECO:0007669"/>
    <property type="project" value="UniProtKB-KW"/>
</dbReference>
<dbReference type="GO" id="GO:0009098">
    <property type="term" value="P:L-leucine biosynthetic process"/>
    <property type="evidence" value="ECO:0007669"/>
    <property type="project" value="UniProtKB-UniRule"/>
</dbReference>
<dbReference type="CDD" id="cd01583">
    <property type="entry name" value="IPMI"/>
    <property type="match status" value="1"/>
</dbReference>
<dbReference type="FunFam" id="3.30.499.10:FF:000007">
    <property type="entry name" value="3-isopropylmalate dehydratase large subunit"/>
    <property type="match status" value="1"/>
</dbReference>
<dbReference type="Gene3D" id="3.30.499.10">
    <property type="entry name" value="Aconitase, domain 3"/>
    <property type="match status" value="2"/>
</dbReference>
<dbReference type="HAMAP" id="MF_01026">
    <property type="entry name" value="LeuC_type1"/>
    <property type="match status" value="1"/>
</dbReference>
<dbReference type="InterPro" id="IPR004430">
    <property type="entry name" value="3-IsopropMal_deHydase_lsu"/>
</dbReference>
<dbReference type="InterPro" id="IPR015931">
    <property type="entry name" value="Acnase/IPM_dHydase_lsu_aba_1/3"/>
</dbReference>
<dbReference type="InterPro" id="IPR001030">
    <property type="entry name" value="Acoase/IPM_deHydtase_lsu_aba"/>
</dbReference>
<dbReference type="InterPro" id="IPR018136">
    <property type="entry name" value="Aconitase_4Fe-4S_BS"/>
</dbReference>
<dbReference type="InterPro" id="IPR036008">
    <property type="entry name" value="Aconitase_4Fe-4S_dom"/>
</dbReference>
<dbReference type="InterPro" id="IPR050067">
    <property type="entry name" value="IPM_dehydratase_rel_enz"/>
</dbReference>
<dbReference type="InterPro" id="IPR033941">
    <property type="entry name" value="IPMI_cat"/>
</dbReference>
<dbReference type="NCBIfam" id="TIGR00170">
    <property type="entry name" value="leuC"/>
    <property type="match status" value="1"/>
</dbReference>
<dbReference type="NCBIfam" id="NF004016">
    <property type="entry name" value="PRK05478.1"/>
    <property type="match status" value="1"/>
</dbReference>
<dbReference type="NCBIfam" id="NF009116">
    <property type="entry name" value="PRK12466.1"/>
    <property type="match status" value="1"/>
</dbReference>
<dbReference type="PANTHER" id="PTHR43822:SF9">
    <property type="entry name" value="3-ISOPROPYLMALATE DEHYDRATASE"/>
    <property type="match status" value="1"/>
</dbReference>
<dbReference type="PANTHER" id="PTHR43822">
    <property type="entry name" value="HOMOACONITASE, MITOCHONDRIAL-RELATED"/>
    <property type="match status" value="1"/>
</dbReference>
<dbReference type="Pfam" id="PF00330">
    <property type="entry name" value="Aconitase"/>
    <property type="match status" value="1"/>
</dbReference>
<dbReference type="PRINTS" id="PR00415">
    <property type="entry name" value="ACONITASE"/>
</dbReference>
<dbReference type="SUPFAM" id="SSF53732">
    <property type="entry name" value="Aconitase iron-sulfur domain"/>
    <property type="match status" value="1"/>
</dbReference>
<dbReference type="PROSITE" id="PS00450">
    <property type="entry name" value="ACONITASE_1"/>
    <property type="match status" value="1"/>
</dbReference>
<dbReference type="PROSITE" id="PS01244">
    <property type="entry name" value="ACONITASE_2"/>
    <property type="match status" value="1"/>
</dbReference>
<name>LEUC_PSEAE</name>
<accession>Q9HZA3</accession>
<evidence type="ECO:0000255" key="1">
    <source>
        <dbReference type="HAMAP-Rule" id="MF_01026"/>
    </source>
</evidence>
<keyword id="KW-0004">4Fe-4S</keyword>
<keyword id="KW-0028">Amino-acid biosynthesis</keyword>
<keyword id="KW-0100">Branched-chain amino acid biosynthesis</keyword>
<keyword id="KW-0408">Iron</keyword>
<keyword id="KW-0411">Iron-sulfur</keyword>
<keyword id="KW-0432">Leucine biosynthesis</keyword>
<keyword id="KW-0456">Lyase</keyword>
<keyword id="KW-0479">Metal-binding</keyword>
<keyword id="KW-1185">Reference proteome</keyword>
<organism>
    <name type="scientific">Pseudomonas aeruginosa (strain ATCC 15692 / DSM 22644 / CIP 104116 / JCM 14847 / LMG 12228 / 1C / PRS 101 / PAO1)</name>
    <dbReference type="NCBI Taxonomy" id="208964"/>
    <lineage>
        <taxon>Bacteria</taxon>
        <taxon>Pseudomonadati</taxon>
        <taxon>Pseudomonadota</taxon>
        <taxon>Gammaproteobacteria</taxon>
        <taxon>Pseudomonadales</taxon>
        <taxon>Pseudomonadaceae</taxon>
        <taxon>Pseudomonas</taxon>
    </lineage>
</organism>